<keyword id="KW-0378">Hydrolase</keyword>
<keyword id="KW-1185">Reference proteome</keyword>
<reference key="1">
    <citation type="journal article" date="1997" name="DNA Res.">
        <title>Structural analysis of Arabidopsis thaliana chromosome 5. I. Sequence features of the 1.6 Mb regions covered by twenty physically assigned P1 clones.</title>
        <authorList>
            <person name="Sato S."/>
            <person name="Kotani H."/>
            <person name="Nakamura Y."/>
            <person name="Kaneko T."/>
            <person name="Asamizu E."/>
            <person name="Fukami M."/>
            <person name="Miyajima N."/>
            <person name="Tabata S."/>
        </authorList>
    </citation>
    <scope>NUCLEOTIDE SEQUENCE [LARGE SCALE GENOMIC DNA]</scope>
    <source>
        <strain>cv. Columbia</strain>
    </source>
</reference>
<reference key="2">
    <citation type="journal article" date="2017" name="Plant J.">
        <title>Araport11: a complete reannotation of the Arabidopsis thaliana reference genome.</title>
        <authorList>
            <person name="Cheng C.Y."/>
            <person name="Krishnakumar V."/>
            <person name="Chan A.P."/>
            <person name="Thibaud-Nissen F."/>
            <person name="Schobel S."/>
            <person name="Town C.D."/>
        </authorList>
    </citation>
    <scope>GENOME REANNOTATION</scope>
    <source>
        <strain>cv. Columbia</strain>
    </source>
</reference>
<reference key="3">
    <citation type="submission" date="2006-06" db="EMBL/GenBank/DDBJ databases">
        <title>Arabidopsis ORF clones.</title>
        <authorList>
            <person name="Kim C.J."/>
            <person name="Chen H."/>
            <person name="Quinitio C."/>
            <person name="Shinn P."/>
            <person name="Ecker J.R."/>
        </authorList>
    </citation>
    <scope>NUCLEOTIDE SEQUENCE [LARGE SCALE MRNA]</scope>
    <source>
        <strain>cv. Columbia</strain>
    </source>
</reference>
<reference key="4">
    <citation type="submission" date="2002-03" db="EMBL/GenBank/DDBJ databases">
        <title>Full-length cDNA from Arabidopsis thaliana.</title>
        <authorList>
            <person name="Brover V.V."/>
            <person name="Troukhan M.E."/>
            <person name="Alexandrov N.A."/>
            <person name="Lu Y.-P."/>
            <person name="Flavell R.B."/>
            <person name="Feldmann K.A."/>
        </authorList>
    </citation>
    <scope>NUCLEOTIDE SEQUENCE [LARGE SCALE MRNA]</scope>
</reference>
<reference key="5">
    <citation type="journal article" date="2011" name="Mol. Genet. Genomics">
        <title>Phylogenetic and genetic linkage between novel atypical dual-specificity phosphatases from non-metazoan organisms.</title>
        <authorList>
            <person name="Roma-Mateo C."/>
            <person name="Sacristan-Reviriego A."/>
            <person name="Beresford N.J."/>
            <person name="Caparros-Martin J.A."/>
            <person name="Culianez-Macia F.A."/>
            <person name="Martin H."/>
            <person name="Molina M."/>
            <person name="Tabernero L."/>
            <person name="Pulido R."/>
        </authorList>
    </citation>
    <scope>FUNCTION</scope>
    <scope>TISSUE SPECIFICITY</scope>
</reference>
<reference key="6">
    <citation type="journal article" date="2022" name="Biochemistry">
        <title>Arabidopsis PFA-DSP-Type Phosphohydrolases Target Specific Inositol Pyrophosphate Messengers.</title>
        <authorList>
            <person name="Gaugler P."/>
            <person name="Schneider R."/>
            <person name="Liu G."/>
            <person name="Qiu D."/>
            <person name="Weber J."/>
            <person name="Schmid J."/>
            <person name="Jork N."/>
            <person name="Haener M."/>
            <person name="Ritter K."/>
            <person name="Fernandez-Rebollo N."/>
            <person name="Giehl R.F.H."/>
            <person name="Trung M.N."/>
            <person name="Yadav R."/>
            <person name="Fiedler D."/>
            <person name="Gaugler V."/>
            <person name="Jessen H.J."/>
            <person name="Schaaf G."/>
            <person name="Laha D."/>
        </authorList>
    </citation>
    <scope>FUNCTION</scope>
    <scope>CATALYTIC ACTIVITY</scope>
</reference>
<dbReference type="EC" id="3.6.1.52" evidence="5"/>
<dbReference type="EMBL" id="AB005242">
    <property type="protein sequence ID" value="BAB09615.1"/>
    <property type="molecule type" value="Genomic_DNA"/>
</dbReference>
<dbReference type="EMBL" id="CP002688">
    <property type="protein sequence ID" value="AED92298.1"/>
    <property type="molecule type" value="Genomic_DNA"/>
</dbReference>
<dbReference type="EMBL" id="BT025778">
    <property type="protein sequence ID" value="ABF83668.1"/>
    <property type="molecule type" value="mRNA"/>
</dbReference>
<dbReference type="EMBL" id="AY085793">
    <property type="protein sequence ID" value="AAM63010.1"/>
    <property type="molecule type" value="mRNA"/>
</dbReference>
<dbReference type="RefSeq" id="NP_197152.1">
    <property type="nucleotide sequence ID" value="NM_121653.4"/>
</dbReference>
<dbReference type="SMR" id="Q9FFD7"/>
<dbReference type="FunCoup" id="Q9FFD7">
    <property type="interactions" value="27"/>
</dbReference>
<dbReference type="IntAct" id="Q9FFD7">
    <property type="interactions" value="1"/>
</dbReference>
<dbReference type="STRING" id="3702.Q9FFD7"/>
<dbReference type="PaxDb" id="3702-AT5G16480.1"/>
<dbReference type="DNASU" id="831509"/>
<dbReference type="EnsemblPlants" id="AT5G16480.1">
    <property type="protein sequence ID" value="AT5G16480.1"/>
    <property type="gene ID" value="AT5G16480"/>
</dbReference>
<dbReference type="GeneID" id="831509"/>
<dbReference type="Gramene" id="AT5G16480.1">
    <property type="protein sequence ID" value="AT5G16480.1"/>
    <property type="gene ID" value="AT5G16480"/>
</dbReference>
<dbReference type="KEGG" id="ath:AT5G16480"/>
<dbReference type="Araport" id="AT5G16480"/>
<dbReference type="TAIR" id="AT5G16480">
    <property type="gene designation" value="PFA-DSP5"/>
</dbReference>
<dbReference type="eggNOG" id="KOG1572">
    <property type="taxonomic scope" value="Eukaryota"/>
</dbReference>
<dbReference type="HOGENOM" id="CLU_047845_5_1_1"/>
<dbReference type="InParanoid" id="Q9FFD7"/>
<dbReference type="OMA" id="TKEPAAM"/>
<dbReference type="PhylomeDB" id="Q9FFD7"/>
<dbReference type="PRO" id="PR:Q9FFD7"/>
<dbReference type="Proteomes" id="UP000006548">
    <property type="component" value="Chromosome 5"/>
</dbReference>
<dbReference type="ExpressionAtlas" id="Q9FFD7">
    <property type="expression patterns" value="baseline and differential"/>
</dbReference>
<dbReference type="GO" id="GO:0052847">
    <property type="term" value="F:inositol-1,5-bisdiphosphate-2,3,4,6-tetrakisphosphate 5-diphosphatase activity"/>
    <property type="evidence" value="ECO:0000314"/>
    <property type="project" value="UniProtKB"/>
</dbReference>
<dbReference type="GO" id="GO:0052848">
    <property type="term" value="F:inositol-3,5-bisdiphosphate-2,3,4,6-tetrakisphosphate 5-diphosphatase activity"/>
    <property type="evidence" value="ECO:0007669"/>
    <property type="project" value="RHEA"/>
</dbReference>
<dbReference type="GO" id="GO:0052845">
    <property type="term" value="F:inositol-5-diphosphate-1,2,3,4,6-pentakisphosphate diphosphatase activity"/>
    <property type="evidence" value="ECO:0000314"/>
    <property type="project" value="UniProtKB"/>
</dbReference>
<dbReference type="GO" id="GO:0016791">
    <property type="term" value="F:phosphatase activity"/>
    <property type="evidence" value="ECO:0000314"/>
    <property type="project" value="TAIR"/>
</dbReference>
<dbReference type="GO" id="GO:0004725">
    <property type="term" value="F:protein tyrosine phosphatase activity"/>
    <property type="evidence" value="ECO:0007669"/>
    <property type="project" value="UniProtKB-EC"/>
</dbReference>
<dbReference type="FunFam" id="3.90.190.10:FF:000024">
    <property type="entry name" value="probable tyrosine-protein phosphatase At1g05000"/>
    <property type="match status" value="1"/>
</dbReference>
<dbReference type="Gene3D" id="3.90.190.10">
    <property type="entry name" value="Protein tyrosine phosphatase superfamily"/>
    <property type="match status" value="1"/>
</dbReference>
<dbReference type="InterPro" id="IPR020428">
    <property type="entry name" value="PFA-DSPs"/>
</dbReference>
<dbReference type="InterPro" id="IPR029021">
    <property type="entry name" value="Prot-tyrosine_phosphatase-like"/>
</dbReference>
<dbReference type="InterPro" id="IPR004861">
    <property type="entry name" value="Siw14-like"/>
</dbReference>
<dbReference type="InterPro" id="IPR016130">
    <property type="entry name" value="Tyr_Pase_AS"/>
</dbReference>
<dbReference type="InterPro" id="IPR020422">
    <property type="entry name" value="TYR_PHOSPHATASE_DUAL_dom"/>
</dbReference>
<dbReference type="PANTHER" id="PTHR31126">
    <property type="entry name" value="TYROSINE-PROTEIN PHOSPHATASE"/>
    <property type="match status" value="1"/>
</dbReference>
<dbReference type="PANTHER" id="PTHR31126:SF46">
    <property type="entry name" value="TYROSINE-PROTEIN PHOSPHATASE DSP5"/>
    <property type="match status" value="1"/>
</dbReference>
<dbReference type="Pfam" id="PF03162">
    <property type="entry name" value="Y_phosphatase2"/>
    <property type="match status" value="1"/>
</dbReference>
<dbReference type="PRINTS" id="PR01911">
    <property type="entry name" value="PFDSPHPHTASE"/>
</dbReference>
<dbReference type="SUPFAM" id="SSF52799">
    <property type="entry name" value="(Phosphotyrosine protein) phosphatases II"/>
    <property type="match status" value="1"/>
</dbReference>
<dbReference type="PROSITE" id="PS00383">
    <property type="entry name" value="TYR_PHOSPHATASE_1"/>
    <property type="match status" value="1"/>
</dbReference>
<dbReference type="PROSITE" id="PS50054">
    <property type="entry name" value="TYR_PHOSPHATASE_DUAL"/>
    <property type="match status" value="1"/>
</dbReference>
<organism>
    <name type="scientific">Arabidopsis thaliana</name>
    <name type="common">Mouse-ear cress</name>
    <dbReference type="NCBI Taxonomy" id="3702"/>
    <lineage>
        <taxon>Eukaryota</taxon>
        <taxon>Viridiplantae</taxon>
        <taxon>Streptophyta</taxon>
        <taxon>Embryophyta</taxon>
        <taxon>Tracheophyta</taxon>
        <taxon>Spermatophyta</taxon>
        <taxon>Magnoliopsida</taxon>
        <taxon>eudicotyledons</taxon>
        <taxon>Gunneridae</taxon>
        <taxon>Pentapetalae</taxon>
        <taxon>rosids</taxon>
        <taxon>malvids</taxon>
        <taxon>Brassicales</taxon>
        <taxon>Brassicaceae</taxon>
        <taxon>Camelineae</taxon>
        <taxon>Arabidopsis</taxon>
    </lineage>
</organism>
<accession>Q9FFD7</accession>
<accession>Q8LDU6</accession>
<feature type="chain" id="PRO_0000442995" description="Inositol diphosphatase DSP5">
    <location>
        <begin position="1"/>
        <end position="204"/>
    </location>
</feature>
<feature type="domain" description="Tyrosine-protein phosphatase" evidence="3">
    <location>
        <begin position="19"/>
        <end position="168"/>
    </location>
</feature>
<feature type="region of interest" description="WPD loop important for active site topology" evidence="2">
    <location>
        <begin position="75"/>
        <end position="87"/>
    </location>
</feature>
<feature type="active site" description="Phosphocysteine intermediate" evidence="3">
    <location>
        <position position="111"/>
    </location>
</feature>
<feature type="site" description="Transition state stabilizer" evidence="1">
    <location>
        <position position="117"/>
    </location>
</feature>
<feature type="sequence conflict" description="In Ref. 4; AAM63010." evidence="7" ref="4">
    <original>E</original>
    <variation>G</variation>
    <location>
        <position position="26"/>
    </location>
</feature>
<proteinExistence type="evidence at protein level"/>
<comment type="function">
    <text evidence="4">Cleaves the beta-phosphate at the 5-position of soluble inositol pyrophosphates (PubMed:35640071). Has highest activity on 5-diphosphoinositol 1,2,3,4,6-pentakisphosphate (5-InsP(7)) (PubMed:35640071). Possesses low phosphotyrosine phosphatase activity in vitro (PubMed:21409566). Dephosphorylates the phosphoinositides PI(3,5)P2 (PubMed:21409566). Hydrolyzes O-methylfluorescein phosphate in vitro (PubMed:21409566).</text>
</comment>
<comment type="catalytic activity">
    <reaction evidence="5">
        <text>5-diphospho-1D-myo-inositol 1,2,3,4,6-pentakisphosphate + H2O = 1D-myo-inositol hexakisphosphate + phosphate + H(+)</text>
        <dbReference type="Rhea" id="RHEA:22384"/>
        <dbReference type="ChEBI" id="CHEBI:15377"/>
        <dbReference type="ChEBI" id="CHEBI:15378"/>
        <dbReference type="ChEBI" id="CHEBI:43474"/>
        <dbReference type="ChEBI" id="CHEBI:58130"/>
        <dbReference type="ChEBI" id="CHEBI:58628"/>
        <dbReference type="EC" id="3.6.1.52"/>
    </reaction>
    <physiologicalReaction direction="left-to-right" evidence="5">
        <dbReference type="Rhea" id="RHEA:22385"/>
    </physiologicalReaction>
</comment>
<comment type="catalytic activity">
    <reaction evidence="5">
        <text>1,5-bis(diphospho)-1D-myo-inositol 2,3,4,6-tetrakisphosphate + H2O = 1-diphospho-1D-myo-inositol 2,3,4,5,6-pentakisphosphate + phosphate + 2 H(+)</text>
        <dbReference type="Rhea" id="RHEA:79699"/>
        <dbReference type="ChEBI" id="CHEBI:15377"/>
        <dbReference type="ChEBI" id="CHEBI:15378"/>
        <dbReference type="ChEBI" id="CHEBI:43474"/>
        <dbReference type="ChEBI" id="CHEBI:74946"/>
        <dbReference type="ChEBI" id="CHEBI:77983"/>
        <dbReference type="EC" id="3.6.1.52"/>
    </reaction>
    <physiologicalReaction direction="left-to-right" evidence="5">
        <dbReference type="Rhea" id="RHEA:79700"/>
    </physiologicalReaction>
</comment>
<comment type="catalytic activity">
    <reaction evidence="5">
        <text>3,5-bis(diphospho)-1D-myo-inositol 1,2,4,6-tetrakisphosphate + H2O = 3-diphospho-1D-myo-inositol 1,2,4,5,6-pentakisphosphate + phosphate + 2 H(+)</text>
        <dbReference type="Rhea" id="RHEA:56312"/>
        <dbReference type="ChEBI" id="CHEBI:15377"/>
        <dbReference type="ChEBI" id="CHEBI:15378"/>
        <dbReference type="ChEBI" id="CHEBI:43474"/>
        <dbReference type="ChEBI" id="CHEBI:140372"/>
        <dbReference type="ChEBI" id="CHEBI:140374"/>
        <dbReference type="EC" id="3.6.1.52"/>
    </reaction>
    <physiologicalReaction direction="left-to-right" evidence="5">
        <dbReference type="Rhea" id="RHEA:56313"/>
    </physiologicalReaction>
</comment>
<comment type="catalytic activity">
    <reaction evidence="5">
        <text>6-diphospho-1D-myo-inositol pentakisphosphate + H2O = 1D-myo-inositol hexakisphosphate + phosphate + H(+)</text>
        <dbReference type="Rhea" id="RHEA:79703"/>
        <dbReference type="ChEBI" id="CHEBI:15377"/>
        <dbReference type="ChEBI" id="CHEBI:15378"/>
        <dbReference type="ChEBI" id="CHEBI:43474"/>
        <dbReference type="ChEBI" id="CHEBI:58130"/>
        <dbReference type="ChEBI" id="CHEBI:230534"/>
        <dbReference type="EC" id="3.6.1.52"/>
    </reaction>
    <physiologicalReaction direction="left-to-right" evidence="5">
        <dbReference type="Rhea" id="RHEA:79704"/>
    </physiologicalReaction>
</comment>
<comment type="tissue specificity">
    <text evidence="4">Highly expressed in flowers. Expressed at low levels in roots, leaves, stems and siliques.</text>
</comment>
<comment type="similarity">
    <text evidence="7">Belongs to the protein-tyrosine phosphatase family. Atypical dual-specificity phosphatase Siw14-like subfamily.</text>
</comment>
<comment type="caution">
    <text evidence="7">Was initially described as a protein tyrosine phosphatase and has phosphotyrosine phosphatase activity in vitro but is now thought to function as an inositol pyrophosphate phosphatase.</text>
</comment>
<protein>
    <recommendedName>
        <fullName evidence="7">Inositol diphosphatase DSP5</fullName>
        <ecNumber evidence="5">3.6.1.52</ecNumber>
    </recommendedName>
    <alternativeName>
        <fullName evidence="7">Inositol pyrophosphate phosphatase DSP5</fullName>
    </alternativeName>
    <alternativeName>
        <fullName evidence="6">Protein PLANT AND FUNGI ATYPICAL DUAL-SPECIFICITY PHOSPHATASE 5</fullName>
        <shortName evidence="6">AtPFA-DSP5</shortName>
    </alternativeName>
</protein>
<sequence length="204" mass="23596">MGLIVDDDNDGEVLIPPPNFSMVEDEIYRSGFPELENFGFLSTLNLRSIIYLCPEPYPEDNLKSLASNNIKLFQFGIEGKTDPPTPMPKDTVLSALRVLVDVRNHPILIHCKRGKHRTGCLVGCLRKVQNWCLSSVLEEYQKCAGLKWRQRDLRFIEDFDVLRLKQCLYSIIYQYNGYGLKRRKLLYQEENVVQEQQKPQATKG</sequence>
<evidence type="ECO:0000250" key="1">
    <source>
        <dbReference type="UniProtKB" id="P53965"/>
    </source>
</evidence>
<evidence type="ECO:0000250" key="2">
    <source>
        <dbReference type="UniProtKB" id="Q9ZVN4"/>
    </source>
</evidence>
<evidence type="ECO:0000255" key="3">
    <source>
        <dbReference type="PROSITE-ProRule" id="PRU00160"/>
    </source>
</evidence>
<evidence type="ECO:0000269" key="4">
    <source>
    </source>
</evidence>
<evidence type="ECO:0000269" key="5">
    <source>
    </source>
</evidence>
<evidence type="ECO:0000303" key="6">
    <source>
    </source>
</evidence>
<evidence type="ECO:0000305" key="7"/>
<evidence type="ECO:0000312" key="8">
    <source>
        <dbReference type="Araport" id="AT5G16480"/>
    </source>
</evidence>
<evidence type="ECO:0000312" key="9">
    <source>
        <dbReference type="EMBL" id="BAB09615.1"/>
    </source>
</evidence>
<name>DSP5_ARATH</name>
<gene>
    <name evidence="7" type="primary">DSP5</name>
    <name evidence="8" type="ordered locus">At5g16480</name>
    <name evidence="9" type="ORF">MQK4.21</name>
</gene>